<accession>Q0APW5</accession>
<name>RS2_MARMM</name>
<gene>
    <name evidence="1" type="primary">rpsB</name>
    <name type="ordered locus">Mmar10_1380</name>
</gene>
<protein>
    <recommendedName>
        <fullName evidence="1">Small ribosomal subunit protein uS2</fullName>
    </recommendedName>
    <alternativeName>
        <fullName evidence="3">30S ribosomal protein S2</fullName>
    </alternativeName>
</protein>
<sequence length="288" mass="31201">MALPDFSMRQLLEAGCHFGHQTHRWNPKMKDFIFGERSNIHIIDLSQTVPLLHQALVKVRETAAKGGRVLFVGTKRQAQDPLAQAAGRCAQYYMNQRWLGGTLTNWRTISNSIARLRELEGMFENEGGMAGLTKKEQLMLTREREKLDRSLGGIKDMGGTPDLMFVIDTNKEGIAIQEAKKLGIPVIAVVDTNCDPDLVDFPIPGNDDASRAISLYCDLIADAVLDGMGDSQLAMGMDLGEAEAPVETLVEAEAEVVAEAAPAAEEAPAAEAEAAATDTSSESDKTEA</sequence>
<comment type="similarity">
    <text evidence="1">Belongs to the universal ribosomal protein uS2 family.</text>
</comment>
<feature type="chain" id="PRO_1000003996" description="Small ribosomal subunit protein uS2">
    <location>
        <begin position="1"/>
        <end position="288"/>
    </location>
</feature>
<feature type="region of interest" description="Disordered" evidence="2">
    <location>
        <begin position="259"/>
        <end position="288"/>
    </location>
</feature>
<feature type="compositionally biased region" description="Low complexity" evidence="2">
    <location>
        <begin position="259"/>
        <end position="276"/>
    </location>
</feature>
<evidence type="ECO:0000255" key="1">
    <source>
        <dbReference type="HAMAP-Rule" id="MF_00291"/>
    </source>
</evidence>
<evidence type="ECO:0000256" key="2">
    <source>
        <dbReference type="SAM" id="MobiDB-lite"/>
    </source>
</evidence>
<evidence type="ECO:0000305" key="3"/>
<reference key="1">
    <citation type="submission" date="2006-08" db="EMBL/GenBank/DDBJ databases">
        <title>Complete sequence of Maricaulis maris MCS10.</title>
        <authorList>
            <consortium name="US DOE Joint Genome Institute"/>
            <person name="Copeland A."/>
            <person name="Lucas S."/>
            <person name="Lapidus A."/>
            <person name="Barry K."/>
            <person name="Detter J.C."/>
            <person name="Glavina del Rio T."/>
            <person name="Hammon N."/>
            <person name="Israni S."/>
            <person name="Dalin E."/>
            <person name="Tice H."/>
            <person name="Pitluck S."/>
            <person name="Saunders E."/>
            <person name="Brettin T."/>
            <person name="Bruce D."/>
            <person name="Han C."/>
            <person name="Tapia R."/>
            <person name="Gilna P."/>
            <person name="Schmutz J."/>
            <person name="Larimer F."/>
            <person name="Land M."/>
            <person name="Hauser L."/>
            <person name="Kyrpides N."/>
            <person name="Mikhailova N."/>
            <person name="Viollier P."/>
            <person name="Stephens C."/>
            <person name="Richardson P."/>
        </authorList>
    </citation>
    <scope>NUCLEOTIDE SEQUENCE [LARGE SCALE GENOMIC DNA]</scope>
    <source>
        <strain>MCS10</strain>
    </source>
</reference>
<dbReference type="EMBL" id="CP000449">
    <property type="protein sequence ID" value="ABI65672.1"/>
    <property type="molecule type" value="Genomic_DNA"/>
</dbReference>
<dbReference type="RefSeq" id="WP_011643319.1">
    <property type="nucleotide sequence ID" value="NC_008347.1"/>
</dbReference>
<dbReference type="SMR" id="Q0APW5"/>
<dbReference type="STRING" id="394221.Mmar10_1380"/>
<dbReference type="KEGG" id="mmr:Mmar10_1380"/>
<dbReference type="eggNOG" id="COG0052">
    <property type="taxonomic scope" value="Bacteria"/>
</dbReference>
<dbReference type="HOGENOM" id="CLU_040318_1_3_5"/>
<dbReference type="OrthoDB" id="9808036at2"/>
<dbReference type="Proteomes" id="UP000001964">
    <property type="component" value="Chromosome"/>
</dbReference>
<dbReference type="GO" id="GO:0022627">
    <property type="term" value="C:cytosolic small ribosomal subunit"/>
    <property type="evidence" value="ECO:0007669"/>
    <property type="project" value="TreeGrafter"/>
</dbReference>
<dbReference type="GO" id="GO:0003735">
    <property type="term" value="F:structural constituent of ribosome"/>
    <property type="evidence" value="ECO:0007669"/>
    <property type="project" value="InterPro"/>
</dbReference>
<dbReference type="GO" id="GO:0006412">
    <property type="term" value="P:translation"/>
    <property type="evidence" value="ECO:0007669"/>
    <property type="project" value="UniProtKB-UniRule"/>
</dbReference>
<dbReference type="CDD" id="cd01425">
    <property type="entry name" value="RPS2"/>
    <property type="match status" value="1"/>
</dbReference>
<dbReference type="FunFam" id="1.10.287.610:FF:000001">
    <property type="entry name" value="30S ribosomal protein S2"/>
    <property type="match status" value="1"/>
</dbReference>
<dbReference type="Gene3D" id="3.40.50.10490">
    <property type="entry name" value="Glucose-6-phosphate isomerase like protein, domain 1"/>
    <property type="match status" value="1"/>
</dbReference>
<dbReference type="Gene3D" id="1.10.287.610">
    <property type="entry name" value="Helix hairpin bin"/>
    <property type="match status" value="1"/>
</dbReference>
<dbReference type="HAMAP" id="MF_00291_B">
    <property type="entry name" value="Ribosomal_uS2_B"/>
    <property type="match status" value="1"/>
</dbReference>
<dbReference type="InterPro" id="IPR001865">
    <property type="entry name" value="Ribosomal_uS2"/>
</dbReference>
<dbReference type="InterPro" id="IPR005706">
    <property type="entry name" value="Ribosomal_uS2_bac/mit/plastid"/>
</dbReference>
<dbReference type="InterPro" id="IPR018130">
    <property type="entry name" value="Ribosomal_uS2_CS"/>
</dbReference>
<dbReference type="InterPro" id="IPR023591">
    <property type="entry name" value="Ribosomal_uS2_flav_dom_sf"/>
</dbReference>
<dbReference type="NCBIfam" id="TIGR01011">
    <property type="entry name" value="rpsB_bact"/>
    <property type="match status" value="1"/>
</dbReference>
<dbReference type="PANTHER" id="PTHR12534">
    <property type="entry name" value="30S RIBOSOMAL PROTEIN S2 PROKARYOTIC AND ORGANELLAR"/>
    <property type="match status" value="1"/>
</dbReference>
<dbReference type="PANTHER" id="PTHR12534:SF0">
    <property type="entry name" value="SMALL RIBOSOMAL SUBUNIT PROTEIN US2M"/>
    <property type="match status" value="1"/>
</dbReference>
<dbReference type="Pfam" id="PF00318">
    <property type="entry name" value="Ribosomal_S2"/>
    <property type="match status" value="1"/>
</dbReference>
<dbReference type="PRINTS" id="PR00395">
    <property type="entry name" value="RIBOSOMALS2"/>
</dbReference>
<dbReference type="SUPFAM" id="SSF52313">
    <property type="entry name" value="Ribosomal protein S2"/>
    <property type="match status" value="1"/>
</dbReference>
<dbReference type="PROSITE" id="PS00963">
    <property type="entry name" value="RIBOSOMAL_S2_2"/>
    <property type="match status" value="1"/>
</dbReference>
<proteinExistence type="inferred from homology"/>
<keyword id="KW-1185">Reference proteome</keyword>
<keyword id="KW-0687">Ribonucleoprotein</keyword>
<keyword id="KW-0689">Ribosomal protein</keyword>
<organism>
    <name type="scientific">Maricaulis maris (strain MCS10)</name>
    <name type="common">Caulobacter maris</name>
    <dbReference type="NCBI Taxonomy" id="394221"/>
    <lineage>
        <taxon>Bacteria</taxon>
        <taxon>Pseudomonadati</taxon>
        <taxon>Pseudomonadota</taxon>
        <taxon>Alphaproteobacteria</taxon>
        <taxon>Maricaulales</taxon>
        <taxon>Maricaulaceae</taxon>
        <taxon>Maricaulis</taxon>
    </lineage>
</organism>